<evidence type="ECO:0000255" key="1">
    <source>
        <dbReference type="HAMAP-Rule" id="MF_02111"/>
    </source>
</evidence>
<proteinExistence type="inferred from homology"/>
<dbReference type="EC" id="6.3.1.19" evidence="1"/>
<dbReference type="EMBL" id="CP000910">
    <property type="protein sequence ID" value="ABY23767.1"/>
    <property type="molecule type" value="Genomic_DNA"/>
</dbReference>
<dbReference type="RefSeq" id="WP_012245437.1">
    <property type="nucleotide sequence ID" value="NC_010168.1"/>
</dbReference>
<dbReference type="SMR" id="A9WSH9"/>
<dbReference type="STRING" id="288705.RSal33209_2034"/>
<dbReference type="MEROPS" id="U72.001"/>
<dbReference type="KEGG" id="rsa:RSal33209_2034"/>
<dbReference type="eggNOG" id="COG0638">
    <property type="taxonomic scope" value="Bacteria"/>
</dbReference>
<dbReference type="HOGENOM" id="CLU_040524_0_1_11"/>
<dbReference type="BRENDA" id="6.3.1.19">
    <property type="organism ID" value="15759"/>
</dbReference>
<dbReference type="UniPathway" id="UPA00997"/>
<dbReference type="UniPathway" id="UPA00998"/>
<dbReference type="Proteomes" id="UP000002007">
    <property type="component" value="Chromosome"/>
</dbReference>
<dbReference type="GO" id="GO:0005524">
    <property type="term" value="F:ATP binding"/>
    <property type="evidence" value="ECO:0007669"/>
    <property type="project" value="UniProtKB-UniRule"/>
</dbReference>
<dbReference type="GO" id="GO:0016879">
    <property type="term" value="F:ligase activity, forming carbon-nitrogen bonds"/>
    <property type="evidence" value="ECO:0007669"/>
    <property type="project" value="InterPro"/>
</dbReference>
<dbReference type="GO" id="GO:0000287">
    <property type="term" value="F:magnesium ion binding"/>
    <property type="evidence" value="ECO:0007669"/>
    <property type="project" value="UniProtKB-UniRule"/>
</dbReference>
<dbReference type="GO" id="GO:0019787">
    <property type="term" value="F:ubiquitin-like protein transferase activity"/>
    <property type="evidence" value="ECO:0007669"/>
    <property type="project" value="UniProtKB-UniRule"/>
</dbReference>
<dbReference type="GO" id="GO:0019941">
    <property type="term" value="P:modification-dependent protein catabolic process"/>
    <property type="evidence" value="ECO:0007669"/>
    <property type="project" value="UniProtKB-UniRule"/>
</dbReference>
<dbReference type="GO" id="GO:0010498">
    <property type="term" value="P:proteasomal protein catabolic process"/>
    <property type="evidence" value="ECO:0007669"/>
    <property type="project" value="UniProtKB-UniRule"/>
</dbReference>
<dbReference type="GO" id="GO:0070490">
    <property type="term" value="P:protein pupylation"/>
    <property type="evidence" value="ECO:0007669"/>
    <property type="project" value="UniProtKB-UniRule"/>
</dbReference>
<dbReference type="HAMAP" id="MF_02111">
    <property type="entry name" value="Pup_ligase"/>
    <property type="match status" value="1"/>
</dbReference>
<dbReference type="InterPro" id="IPR022279">
    <property type="entry name" value="Pup_ligase"/>
</dbReference>
<dbReference type="InterPro" id="IPR004347">
    <property type="entry name" value="Pup_ligase/deamidase"/>
</dbReference>
<dbReference type="NCBIfam" id="TIGR03686">
    <property type="entry name" value="pupylate_PafA"/>
    <property type="match status" value="1"/>
</dbReference>
<dbReference type="PANTHER" id="PTHR42307">
    <property type="entry name" value="PUP DEAMIDASE/DEPUPYLASE"/>
    <property type="match status" value="1"/>
</dbReference>
<dbReference type="PANTHER" id="PTHR42307:SF3">
    <property type="entry name" value="PUP--PROTEIN LIGASE"/>
    <property type="match status" value="1"/>
</dbReference>
<dbReference type="Pfam" id="PF03136">
    <property type="entry name" value="Pup_ligase"/>
    <property type="match status" value="1"/>
</dbReference>
<dbReference type="PIRSF" id="PIRSF018077">
    <property type="entry name" value="UCP018077"/>
    <property type="match status" value="1"/>
</dbReference>
<feature type="chain" id="PRO_0000395943" description="Pup--protein ligase">
    <location>
        <begin position="1"/>
        <end position="461"/>
    </location>
</feature>
<feature type="active site" description="Proton acceptor" evidence="1">
    <location>
        <position position="57"/>
    </location>
</feature>
<feature type="binding site" evidence="1">
    <location>
        <position position="9"/>
    </location>
    <ligand>
        <name>Mg(2+)</name>
        <dbReference type="ChEBI" id="CHEBI:18420"/>
    </ligand>
</feature>
<feature type="binding site" evidence="1">
    <location>
        <position position="53"/>
    </location>
    <ligand>
        <name>ATP</name>
        <dbReference type="ChEBI" id="CHEBI:30616"/>
    </ligand>
</feature>
<feature type="binding site" evidence="1">
    <location>
        <position position="55"/>
    </location>
    <ligand>
        <name>Mg(2+)</name>
        <dbReference type="ChEBI" id="CHEBI:18420"/>
    </ligand>
</feature>
<feature type="binding site" evidence="1">
    <location>
        <position position="63"/>
    </location>
    <ligand>
        <name>Mg(2+)</name>
        <dbReference type="ChEBI" id="CHEBI:18420"/>
    </ligand>
</feature>
<feature type="binding site" evidence="1">
    <location>
        <position position="66"/>
    </location>
    <ligand>
        <name>ATP</name>
        <dbReference type="ChEBI" id="CHEBI:30616"/>
    </ligand>
</feature>
<feature type="binding site" evidence="1">
    <location>
        <position position="420"/>
    </location>
    <ligand>
        <name>ATP</name>
        <dbReference type="ChEBI" id="CHEBI:30616"/>
    </ligand>
</feature>
<comment type="function">
    <text evidence="1">Catalyzes the covalent attachment of the prokaryotic ubiquitin-like protein modifier Pup to the proteasomal substrate proteins, thereby targeting them for proteasomal degradation. This tagging system is termed pupylation. The ligation reaction involves the side-chain carboxylate of the C-terminal glutamate of Pup and the side-chain amino group of a substrate lysine.</text>
</comment>
<comment type="catalytic activity">
    <reaction evidence="1">
        <text>ATP + [prokaryotic ubiquitin-like protein]-L-glutamate + [protein]-L-lysine = ADP + phosphate + N(6)-([prokaryotic ubiquitin-like protein]-gamma-L-glutamyl)-[protein]-L-lysine.</text>
        <dbReference type="EC" id="6.3.1.19"/>
    </reaction>
</comment>
<comment type="pathway">
    <text evidence="1">Protein degradation; proteasomal Pup-dependent pathway.</text>
</comment>
<comment type="pathway">
    <text evidence="1">Protein modification; protein pupylation.</text>
</comment>
<comment type="miscellaneous">
    <text evidence="1">The reaction mechanism probably proceeds via the activation of Pup by phosphorylation of its C-terminal glutamate, which is then subject to nucleophilic attack by the substrate lysine, resulting in an isopeptide bond and the release of phosphate as a good leaving group.</text>
</comment>
<comment type="similarity">
    <text evidence="1">Belongs to the Pup ligase/Pup deamidase family. Pup-conjugating enzyme subfamily.</text>
</comment>
<organism>
    <name type="scientific">Renibacterium salmoninarum (strain ATCC 33209 / DSM 20767 / JCM 11484 / NBRC 15589 / NCIMB 2235)</name>
    <dbReference type="NCBI Taxonomy" id="288705"/>
    <lineage>
        <taxon>Bacteria</taxon>
        <taxon>Bacillati</taxon>
        <taxon>Actinomycetota</taxon>
        <taxon>Actinomycetes</taxon>
        <taxon>Micrococcales</taxon>
        <taxon>Micrococcaceae</taxon>
        <taxon>Renibacterium</taxon>
    </lineage>
</organism>
<reference key="1">
    <citation type="journal article" date="2008" name="J. Bacteriol.">
        <title>Genome sequence of the fish pathogen Renibacterium salmoninarum suggests reductive evolution away from an environmental Arthrobacter ancestor.</title>
        <authorList>
            <person name="Wiens G.D."/>
            <person name="Rockey D.D."/>
            <person name="Wu Z."/>
            <person name="Chang J."/>
            <person name="Levy R."/>
            <person name="Crane S."/>
            <person name="Chen D.S."/>
            <person name="Capri G.R."/>
            <person name="Burnett J.R."/>
            <person name="Sudheesh P.S."/>
            <person name="Schipma M.J."/>
            <person name="Burd H."/>
            <person name="Bhattacharyya A."/>
            <person name="Rhodes L.D."/>
            <person name="Kaul R."/>
            <person name="Strom M.S."/>
        </authorList>
    </citation>
    <scope>NUCLEOTIDE SEQUENCE [LARGE SCALE GENOMIC DNA]</scope>
    <source>
        <strain>ATCC 33209 / DSM 20767 / JCM 11484 / NBRC 15589 / NCIMB 2235</strain>
    </source>
</reference>
<name>PAFA_RENSM</name>
<protein>
    <recommendedName>
        <fullName evidence="1">Pup--protein ligase</fullName>
        <ecNumber evidence="1">6.3.1.19</ecNumber>
    </recommendedName>
    <alternativeName>
        <fullName evidence="1">Proteasome accessory factor A</fullName>
    </alternativeName>
    <alternativeName>
        <fullName evidence="1">Pup-conjugating enzyme</fullName>
    </alternativeName>
</protein>
<sequence length="461" mass="51672">MDRRIFGIETEFGITFSSKDSRPLSPEEVARYLFRRVVSWGRSSNVFLANGSRLYLDVGSHPEYATAECDEIGQLIAHDRAGELILNELVAEAEKRLNLEGFAGSVYLFKNNTDSAGNSYGSHENYLIGRRGEFARLAEILIPFLVTRQLIAGAGKVHQNAGQANYSFSQRAEHIWEGISSATTRSRPIINTRDEPHADAELYRRLHVIVGDSNMSETTTMLKVGTIDLILRMVEDGVIMRDLRMENPIRSIREISQDLTGMAPVKLANGRVTNALEIQREYFEKVSEYLLTAGAHHALVPRIMDLWQRTLNAIEQQDFSSIETEIDWAIKKKLLDAYQAKNSLTLNSPRLAQIDLAYHDIATDRGLYYLLQKRGAVARVNEDGQAMAAIEAPPATTRAALRGKFVKAAQSAGRDYTVDWVHLKLNDQAHQTVLCKDPFRNTDERVDALIASLGTESDFSD</sequence>
<accession>A9WSH9</accession>
<gene>
    <name evidence="1" type="primary">pafA</name>
    <name type="ordered locus">RSal33209_2034</name>
</gene>
<keyword id="KW-0067">ATP-binding</keyword>
<keyword id="KW-0436">Ligase</keyword>
<keyword id="KW-0460">Magnesium</keyword>
<keyword id="KW-0479">Metal-binding</keyword>
<keyword id="KW-0547">Nucleotide-binding</keyword>
<keyword id="KW-1185">Reference proteome</keyword>
<keyword id="KW-0833">Ubl conjugation pathway</keyword>